<comment type="function">
    <text evidence="5 12 15 16 17">Required for ovarian folliculogenesis. Promotes primordial follicle development. Stimulates granulosa cell proliferation. Promotes cell transition from G0/G1 to S and G2/M phases, through an increase of CCND1 and CCNE1 expression, and RB1 phosphorylation. It regulates STAR expression and cAMP-dependent progesterone release in granulosa and thecal cells. Attenuates the suppressive effects of activin A on STAR expression and progesterone production by increasing the expression of inhibin B. It suppresses FST and FSTL3 production in granulosa-lutein cells.</text>
</comment>
<comment type="subunit">
    <text evidence="1 19">Homodimer or heterodimer (Potential). But, in contrast to other members of this family, cannot be disulfide-linked (By similarity).</text>
</comment>
<comment type="subcellular location">
    <subcellularLocation>
        <location evidence="1">Secreted</location>
    </subcellularLocation>
</comment>
<comment type="tissue specificity">
    <text evidence="4 5">Expressed in ovarian granulosa cells. Present in oocytes of primary follicles (at protein level).</text>
</comment>
<comment type="PTM">
    <text evidence="11 14">Phosphorylated; phosphorylation is critical for GDF9 function. In vitro, can be phosphorylated by CK at Ser-325.</text>
</comment>
<comment type="disease">
    <text evidence="8">Altered GDF9 function may be involved in ovarian disorders and contribute to the likelihood of dizygotic twinning.</text>
</comment>
<comment type="disease" evidence="6 7 8 9 10 13 18">
    <disease id="DI-05263">
        <name>Premature ovarian failure 14</name>
        <acronym>POF14</acronym>
        <description>An ovarian disorder defined as the cessation of ovarian function under the age of 40 years. It is characterized by oligomenorrhea or amenorrhea, in the presence of elevated levels of serum gonadotropins and low estradiol.</description>
        <dbReference type="MIM" id="618014"/>
    </disease>
    <text>The disease is caused by variants affecting the gene represented in this entry.</text>
</comment>
<comment type="miscellaneous">
    <text>Ovarian physiology and fertility are controlled by endocrine and paracrine signals. These act in a species-dependent manner and determine the ovulation quota in different mammalian species. While humans, and mammals such as the cow or red deer, normally ovulate only one egg per cycle, other mammals such as mouse and pig can ovulate in excess of ten per cycle. The mechanisms that regulate the species-specific differences in the number of follicles that go onto ovulate during each reproductive cycle are poorly understood. According to PubMed:21970812, mRNA expression levels of GDF9 and BMP15 are tightly coregulated within each species and influence species-specific ovulation-rates.</text>
</comment>
<comment type="similarity">
    <text evidence="19">Belongs to the TGF-beta family.</text>
</comment>
<feature type="signal peptide" evidence="2">
    <location>
        <begin position="1"/>
        <end position="24"/>
    </location>
</feature>
<feature type="propeptide" id="PRO_0000033980" evidence="2">
    <location>
        <begin position="25"/>
        <end position="319"/>
    </location>
</feature>
<feature type="chain" id="PRO_0000033981" description="Growth/differentiation factor 9">
    <location>
        <begin position="320"/>
        <end position="454"/>
    </location>
</feature>
<feature type="region of interest" description="Disordered" evidence="3">
    <location>
        <begin position="303"/>
        <end position="330"/>
    </location>
</feature>
<feature type="modified residue" description="Phosphoserine; by CK" evidence="20">
    <location>
        <position position="325"/>
    </location>
</feature>
<feature type="glycosylation site" description="N-linked (GlcNAc...) asparagine" evidence="2">
    <location>
        <position position="106"/>
    </location>
</feature>
<feature type="glycosylation site" description="N-linked (GlcNAc...) asparagine" evidence="2">
    <location>
        <position position="163"/>
    </location>
</feature>
<feature type="glycosylation site" description="N-linked (GlcNAc...) asparagine" evidence="2">
    <location>
        <position position="236"/>
    </location>
</feature>
<feature type="glycosylation site" description="N-linked (GlcNAc...) asparagine" evidence="2">
    <location>
        <position position="255"/>
    </location>
</feature>
<feature type="glycosylation site" description="N-linked (GlcNAc...) asparagine" evidence="2">
    <location>
        <position position="268"/>
    </location>
</feature>
<feature type="glycosylation site" description="N-linked (GlcNAc...) asparagine" evidence="2">
    <location>
        <position position="338"/>
    </location>
</feature>
<feature type="disulfide bond" evidence="1">
    <location>
        <begin position="353"/>
        <end position="419"/>
    </location>
</feature>
<feature type="disulfide bond" evidence="1">
    <location>
        <begin position="382"/>
        <end position="451"/>
    </location>
</feature>
<feature type="disulfide bond" evidence="1">
    <location>
        <begin position="386"/>
        <end position="453"/>
    </location>
</feature>
<feature type="sequence variant" id="VAR_066934" description="In POF14; uncertain significance; dbSNP:rs138136756." evidence="13">
    <original>D</original>
    <variation>Y</variation>
    <location>
        <position position="57"/>
    </location>
</feature>
<feature type="sequence variant" id="VAR_058945" description="In POF14; uncertain significance." evidence="6">
    <original>K</original>
    <variation>E</variation>
    <location>
        <position position="67"/>
    </location>
</feature>
<feature type="sequence variant" id="VAR_066935" description="In POF14; uncertain significance; also found at higher frequency in mothers of dizygotic twins than in controls; dbSNP:rs61754583." evidence="8 9">
    <original>P</original>
    <variation>S</variation>
    <location>
        <position position="103"/>
    </location>
</feature>
<feature type="sequence variant" id="VAR_066936" description="Found at higher frequency in mothers of dizygotic twins than in controls; dbSNP:rs149821575." evidence="8">
    <original>T</original>
    <variation>I</variation>
    <location>
        <position position="121"/>
    </location>
</feature>
<feature type="sequence variant" id="VAR_066937" description="In POF14; uncertain significance; dbSNP:rs76349024." evidence="10">
    <original>R</original>
    <variation>C</variation>
    <location>
        <position position="146"/>
    </location>
</feature>
<feature type="sequence variant" id="VAR_058946" description="In POF14; uncertain significance." evidence="7">
    <original>S</original>
    <variation>Y</variation>
    <location>
        <position position="186"/>
    </location>
</feature>
<feature type="sequence variant" id="VAR_058947" description="In POF14; uncertain significance; dbSNP:rs1205723048." evidence="6">
    <original>V</original>
    <variation>M</variation>
    <location>
        <position position="216"/>
    </location>
</feature>
<feature type="sequence variant" id="VAR_066938" description="In POF14; uncertain significance." evidence="10">
    <original>T</original>
    <variation>A</variation>
    <location>
        <position position="238"/>
    </location>
</feature>
<feature type="sequence variant" id="VAR_066939" description="Found at higher frequency in mothers of dizygotic twins than in controls; dbSNP:rs373477788." evidence="8">
    <original>P</original>
    <variation>L</variation>
    <location>
        <position position="374"/>
    </location>
</feature>
<feature type="sequence variant" id="VAR_066940" description="In POF14; uncertain significance; dbSNP:rs118080183." evidence="10">
    <original>S</original>
    <variation>T</variation>
    <location>
        <position position="428"/>
    </location>
</feature>
<feature type="sequence variant" id="VAR_066941" description="Found at higher frequency in mothers of dizygotic twins than in controls; dbSNP:rs61754582." evidence="8">
    <original>R</original>
    <variation>C</variation>
    <location>
        <position position="454"/>
    </location>
</feature>
<proteinExistence type="evidence at protein level"/>
<keyword id="KW-0165">Cleavage on pair of basic residues</keyword>
<keyword id="KW-0202">Cytokine</keyword>
<keyword id="KW-1015">Disulfide bond</keyword>
<keyword id="KW-0325">Glycoprotein</keyword>
<keyword id="KW-0339">Growth factor</keyword>
<keyword id="KW-0597">Phosphoprotein</keyword>
<keyword id="KW-1066">Premature ovarian failure</keyword>
<keyword id="KW-1267">Proteomics identification</keyword>
<keyword id="KW-1185">Reference proteome</keyword>
<keyword id="KW-0964">Secreted</keyword>
<keyword id="KW-0732">Signal</keyword>
<dbReference type="EMBL" id="AC004500">
    <property type="protein sequence ID" value="AAC08450.1"/>
    <property type="molecule type" value="Genomic_DNA"/>
</dbReference>
<dbReference type="EMBL" id="BC096228">
    <property type="protein sequence ID" value="AAH96228.1"/>
    <property type="molecule type" value="mRNA"/>
</dbReference>
<dbReference type="EMBL" id="BC096229">
    <property type="protein sequence ID" value="AAH96229.1"/>
    <property type="molecule type" value="mRNA"/>
</dbReference>
<dbReference type="EMBL" id="BC096230">
    <property type="protein sequence ID" value="AAH96230.1"/>
    <property type="molecule type" value="mRNA"/>
</dbReference>
<dbReference type="EMBL" id="BC096231">
    <property type="protein sequence ID" value="AAH96231.1"/>
    <property type="molecule type" value="mRNA"/>
</dbReference>
<dbReference type="CCDS" id="CCDS4162.1"/>
<dbReference type="RefSeq" id="NP_001275753.1">
    <property type="nucleotide sequence ID" value="NM_001288824.2"/>
</dbReference>
<dbReference type="RefSeq" id="NP_005251.1">
    <property type="nucleotide sequence ID" value="NM_005260.7"/>
</dbReference>
<dbReference type="RefSeq" id="XP_011541610.1">
    <property type="nucleotide sequence ID" value="XM_011543308.4"/>
</dbReference>
<dbReference type="RefSeq" id="XP_047273050.1">
    <property type="nucleotide sequence ID" value="XM_047417094.1"/>
</dbReference>
<dbReference type="RefSeq" id="XP_054208333.1">
    <property type="nucleotide sequence ID" value="XM_054352358.1"/>
</dbReference>
<dbReference type="RefSeq" id="XP_054208334.1">
    <property type="nucleotide sequence ID" value="XM_054352359.1"/>
</dbReference>
<dbReference type="BioGRID" id="108930">
    <property type="interactions" value="58"/>
</dbReference>
<dbReference type="FunCoup" id="O60383">
    <property type="interactions" value="518"/>
</dbReference>
<dbReference type="IntAct" id="O60383">
    <property type="interactions" value="55"/>
</dbReference>
<dbReference type="MINT" id="O60383"/>
<dbReference type="STRING" id="9606.ENSP00000367942"/>
<dbReference type="GlyCosmos" id="O60383">
    <property type="glycosylation" value="6 sites, No reported glycans"/>
</dbReference>
<dbReference type="GlyGen" id="O60383">
    <property type="glycosylation" value="6 sites"/>
</dbReference>
<dbReference type="iPTMnet" id="O60383"/>
<dbReference type="PhosphoSitePlus" id="O60383"/>
<dbReference type="BioMuta" id="GDF9"/>
<dbReference type="MassIVE" id="O60383"/>
<dbReference type="PaxDb" id="9606-ENSP00000367942"/>
<dbReference type="PeptideAtlas" id="O60383"/>
<dbReference type="ProteomicsDB" id="49386"/>
<dbReference type="Antibodypedia" id="26178">
    <property type="antibodies" value="559 antibodies from 33 providers"/>
</dbReference>
<dbReference type="DNASU" id="2661"/>
<dbReference type="Ensembl" id="ENST00000378673.2">
    <property type="protein sequence ID" value="ENSP00000367942.2"/>
    <property type="gene ID" value="ENSG00000164404.9"/>
</dbReference>
<dbReference type="Ensembl" id="ENST00000464378.2">
    <property type="protein sequence ID" value="ENSP00000509893.1"/>
    <property type="gene ID" value="ENSG00000164404.9"/>
</dbReference>
<dbReference type="Ensembl" id="ENST00000687138.1">
    <property type="protein sequence ID" value="ENSP00000510441.1"/>
    <property type="gene ID" value="ENSG00000164404.9"/>
</dbReference>
<dbReference type="GeneID" id="2661"/>
<dbReference type="KEGG" id="hsa:2661"/>
<dbReference type="MANE-Select" id="ENST00000687138.1">
    <property type="protein sequence ID" value="ENSP00000510441.1"/>
    <property type="RefSeq nucleotide sequence ID" value="NM_005260.7"/>
    <property type="RefSeq protein sequence ID" value="NP_005251.1"/>
</dbReference>
<dbReference type="UCSC" id="uc003kxz.3">
    <property type="organism name" value="human"/>
</dbReference>
<dbReference type="AGR" id="HGNC:4224"/>
<dbReference type="CTD" id="2661"/>
<dbReference type="DisGeNET" id="2661"/>
<dbReference type="GeneCards" id="GDF9"/>
<dbReference type="HGNC" id="HGNC:4224">
    <property type="gene designation" value="GDF9"/>
</dbReference>
<dbReference type="HPA" id="ENSG00000164404">
    <property type="expression patterns" value="Tissue enhanced (testis)"/>
</dbReference>
<dbReference type="MalaCards" id="GDF9"/>
<dbReference type="MIM" id="601918">
    <property type="type" value="gene"/>
</dbReference>
<dbReference type="MIM" id="618014">
    <property type="type" value="phenotype"/>
</dbReference>
<dbReference type="neXtProt" id="NX_O60383"/>
<dbReference type="OpenTargets" id="ENSG00000164404"/>
<dbReference type="PharmGKB" id="PA28639"/>
<dbReference type="VEuPathDB" id="HostDB:ENSG00000164404"/>
<dbReference type="eggNOG" id="KOG3900">
    <property type="taxonomic scope" value="Eukaryota"/>
</dbReference>
<dbReference type="GeneTree" id="ENSGT00940000159784"/>
<dbReference type="InParanoid" id="O60383"/>
<dbReference type="OMA" id="TWRICVC"/>
<dbReference type="OrthoDB" id="6427922at2759"/>
<dbReference type="PAN-GO" id="O60383">
    <property type="GO annotations" value="6 GO annotations based on evolutionary models"/>
</dbReference>
<dbReference type="PhylomeDB" id="O60383"/>
<dbReference type="TreeFam" id="TF351788"/>
<dbReference type="PathwayCommons" id="O60383"/>
<dbReference type="SignaLink" id="O60383"/>
<dbReference type="BioGRID-ORCS" id="2661">
    <property type="hits" value="7 hits in 1145 CRISPR screens"/>
</dbReference>
<dbReference type="ChiTaRS" id="GDF9">
    <property type="organism name" value="human"/>
</dbReference>
<dbReference type="GeneWiki" id="Growth_differentiation_factor-9"/>
<dbReference type="GenomeRNAi" id="2661"/>
<dbReference type="Pharos" id="O60383">
    <property type="development level" value="Tbio"/>
</dbReference>
<dbReference type="PRO" id="PR:O60383"/>
<dbReference type="Proteomes" id="UP000005640">
    <property type="component" value="Chromosome 5"/>
</dbReference>
<dbReference type="RNAct" id="O60383">
    <property type="molecule type" value="protein"/>
</dbReference>
<dbReference type="Bgee" id="ENSG00000164404">
    <property type="expression patterns" value="Expressed in oocyte and 102 other cell types or tissues"/>
</dbReference>
<dbReference type="ExpressionAtlas" id="O60383">
    <property type="expression patterns" value="baseline and differential"/>
</dbReference>
<dbReference type="GO" id="GO:0005737">
    <property type="term" value="C:cytoplasm"/>
    <property type="evidence" value="ECO:0007669"/>
    <property type="project" value="Ensembl"/>
</dbReference>
<dbReference type="GO" id="GO:0005615">
    <property type="term" value="C:extracellular space"/>
    <property type="evidence" value="ECO:0000318"/>
    <property type="project" value="GO_Central"/>
</dbReference>
<dbReference type="GO" id="GO:0005125">
    <property type="term" value="F:cytokine activity"/>
    <property type="evidence" value="ECO:0000318"/>
    <property type="project" value="GO_Central"/>
</dbReference>
<dbReference type="GO" id="GO:0008083">
    <property type="term" value="F:growth factor activity"/>
    <property type="evidence" value="ECO:0000304"/>
    <property type="project" value="ProtInc"/>
</dbReference>
<dbReference type="GO" id="GO:0007292">
    <property type="term" value="P:female gamete generation"/>
    <property type="evidence" value="ECO:0000304"/>
    <property type="project" value="ProtInc"/>
</dbReference>
<dbReference type="GO" id="GO:0030308">
    <property type="term" value="P:negative regulation of cell growth"/>
    <property type="evidence" value="ECO:0007669"/>
    <property type="project" value="Ensembl"/>
</dbReference>
<dbReference type="GO" id="GO:0001555">
    <property type="term" value="P:oocyte growth"/>
    <property type="evidence" value="ECO:0007669"/>
    <property type="project" value="Ensembl"/>
</dbReference>
<dbReference type="GO" id="GO:0008284">
    <property type="term" value="P:positive regulation of cell population proliferation"/>
    <property type="evidence" value="ECO:0000314"/>
    <property type="project" value="UniProtKB"/>
</dbReference>
<dbReference type="GO" id="GO:2000870">
    <property type="term" value="P:regulation of progesterone secretion"/>
    <property type="evidence" value="ECO:0000314"/>
    <property type="project" value="UniProtKB"/>
</dbReference>
<dbReference type="GO" id="GO:0007179">
    <property type="term" value="P:transforming growth factor beta receptor signaling pathway"/>
    <property type="evidence" value="ECO:0000304"/>
    <property type="project" value="ProtInc"/>
</dbReference>
<dbReference type="CDD" id="cd19403">
    <property type="entry name" value="TGF_beta_GDF9"/>
    <property type="match status" value="1"/>
</dbReference>
<dbReference type="FunFam" id="2.10.90.10:FF:000012">
    <property type="entry name" value="Growth/differentiation factor 9 (Predicted)"/>
    <property type="match status" value="1"/>
</dbReference>
<dbReference type="Gene3D" id="2.10.90.10">
    <property type="entry name" value="Cystine-knot cytokines"/>
    <property type="match status" value="1"/>
</dbReference>
<dbReference type="InterPro" id="IPR029034">
    <property type="entry name" value="Cystine-knot_cytokine"/>
</dbReference>
<dbReference type="InterPro" id="IPR015617">
    <property type="entry name" value="Growth_differentiation_fac-9_C"/>
</dbReference>
<dbReference type="InterPro" id="IPR001839">
    <property type="entry name" value="TGF-b_C"/>
</dbReference>
<dbReference type="InterPro" id="IPR015615">
    <property type="entry name" value="TGF-beta-rel"/>
</dbReference>
<dbReference type="InterPro" id="IPR017948">
    <property type="entry name" value="TGFb_CS"/>
</dbReference>
<dbReference type="PANTHER" id="PTHR11848:SF19">
    <property type="entry name" value="GROWTH_DIFFERENTIATION FACTOR 9"/>
    <property type="match status" value="1"/>
</dbReference>
<dbReference type="PANTHER" id="PTHR11848">
    <property type="entry name" value="TGF-BETA FAMILY"/>
    <property type="match status" value="1"/>
</dbReference>
<dbReference type="Pfam" id="PF00019">
    <property type="entry name" value="TGF_beta"/>
    <property type="match status" value="1"/>
</dbReference>
<dbReference type="SMART" id="SM00204">
    <property type="entry name" value="TGFB"/>
    <property type="match status" value="1"/>
</dbReference>
<dbReference type="SUPFAM" id="SSF57501">
    <property type="entry name" value="Cystine-knot cytokines"/>
    <property type="match status" value="1"/>
</dbReference>
<dbReference type="PROSITE" id="PS00250">
    <property type="entry name" value="TGF_BETA_1"/>
    <property type="match status" value="1"/>
</dbReference>
<dbReference type="PROSITE" id="PS51362">
    <property type="entry name" value="TGF_BETA_2"/>
    <property type="match status" value="1"/>
</dbReference>
<sequence length="454" mass="51444">MARPNKFLLWFCCFAWLCFPISLGSQASGGEAQIAASAELESGAMPWSLLQHIDERDRAGLLPALFKVLSVGRGGSPRLQPDSRALHYMKKLYKTYATKEGIPKSNRSHLYNTVRLFTPCTRHKQAPGDQVTGILPSVELLFNLDRITTVEHLLKSVLLYNINNSVSFSSAVKCVCNLMIKEPKSSSRTLGRAPYSFTFNSQFEFGKKHKWIQIDVTSLLQPLVASNKRSIHMSINFTCMKDQLEHPSAQNGLFNMTLVSPSLILYLNDTSAQAYHSWYSLHYKRRPSQGPDQERSLSAYPVGEEAAEDGRSSHHRHRRGQETVSSELKKPLGPASFNLSEYFRQFLLPQNECELHDFRLSFSQLKWDNWIVAPHRYNPRYCKGDCPRAVGHRYGSPVHTMVQNIIYEKLDSSVPRPSCVPAKYSPLSVLTIEPDGSIAYKEYEDMIATKCTCR</sequence>
<protein>
    <recommendedName>
        <fullName>Growth/differentiation factor 9</fullName>
        <shortName>GDF-9</shortName>
    </recommendedName>
</protein>
<evidence type="ECO:0000250" key="1"/>
<evidence type="ECO:0000255" key="2"/>
<evidence type="ECO:0000256" key="3">
    <source>
        <dbReference type="SAM" id="MobiDB-lite"/>
    </source>
</evidence>
<evidence type="ECO:0000269" key="4">
    <source>
    </source>
</evidence>
<evidence type="ECO:0000269" key="5">
    <source>
    </source>
</evidence>
<evidence type="ECO:0000269" key="6">
    <source>
    </source>
</evidence>
<evidence type="ECO:0000269" key="7">
    <source>
    </source>
</evidence>
<evidence type="ECO:0000269" key="8">
    <source>
    </source>
</evidence>
<evidence type="ECO:0000269" key="9">
    <source>
    </source>
</evidence>
<evidence type="ECO:0000269" key="10">
    <source>
    </source>
</evidence>
<evidence type="ECO:0000269" key="11">
    <source>
    </source>
</evidence>
<evidence type="ECO:0000269" key="12">
    <source>
    </source>
</evidence>
<evidence type="ECO:0000269" key="13">
    <source>
    </source>
</evidence>
<evidence type="ECO:0000269" key="14">
    <source>
    </source>
</evidence>
<evidence type="ECO:0000269" key="15">
    <source>
    </source>
</evidence>
<evidence type="ECO:0000269" key="16">
    <source>
    </source>
</evidence>
<evidence type="ECO:0000269" key="17">
    <source>
    </source>
</evidence>
<evidence type="ECO:0000269" key="18">
    <source>
    </source>
</evidence>
<evidence type="ECO:0000305" key="19"/>
<evidence type="ECO:0000305" key="20">
    <source>
    </source>
</evidence>
<organism>
    <name type="scientific">Homo sapiens</name>
    <name type="common">Human</name>
    <dbReference type="NCBI Taxonomy" id="9606"/>
    <lineage>
        <taxon>Eukaryota</taxon>
        <taxon>Metazoa</taxon>
        <taxon>Chordata</taxon>
        <taxon>Craniata</taxon>
        <taxon>Vertebrata</taxon>
        <taxon>Euteleostomi</taxon>
        <taxon>Mammalia</taxon>
        <taxon>Eutheria</taxon>
        <taxon>Euarchontoglires</taxon>
        <taxon>Primates</taxon>
        <taxon>Haplorrhini</taxon>
        <taxon>Catarrhini</taxon>
        <taxon>Hominidae</taxon>
        <taxon>Homo</taxon>
    </lineage>
</organism>
<name>GDF9_HUMAN</name>
<gene>
    <name type="primary">GDF9</name>
</gene>
<reference key="1">
    <citation type="journal article" date="2004" name="Nature">
        <title>The DNA sequence and comparative analysis of human chromosome 5.</title>
        <authorList>
            <person name="Schmutz J."/>
            <person name="Martin J."/>
            <person name="Terry A."/>
            <person name="Couronne O."/>
            <person name="Grimwood J."/>
            <person name="Lowry S."/>
            <person name="Gordon L.A."/>
            <person name="Scott D."/>
            <person name="Xie G."/>
            <person name="Huang W."/>
            <person name="Hellsten U."/>
            <person name="Tran-Gyamfi M."/>
            <person name="She X."/>
            <person name="Prabhakar S."/>
            <person name="Aerts A."/>
            <person name="Altherr M."/>
            <person name="Bajorek E."/>
            <person name="Black S."/>
            <person name="Branscomb E."/>
            <person name="Caoile C."/>
            <person name="Challacombe J.F."/>
            <person name="Chan Y.M."/>
            <person name="Denys M."/>
            <person name="Detter J.C."/>
            <person name="Escobar J."/>
            <person name="Flowers D."/>
            <person name="Fotopulos D."/>
            <person name="Glavina T."/>
            <person name="Gomez M."/>
            <person name="Gonzales E."/>
            <person name="Goodstein D."/>
            <person name="Grigoriev I."/>
            <person name="Groza M."/>
            <person name="Hammon N."/>
            <person name="Hawkins T."/>
            <person name="Haydu L."/>
            <person name="Israni S."/>
            <person name="Jett J."/>
            <person name="Kadner K."/>
            <person name="Kimball H."/>
            <person name="Kobayashi A."/>
            <person name="Lopez F."/>
            <person name="Lou Y."/>
            <person name="Martinez D."/>
            <person name="Medina C."/>
            <person name="Morgan J."/>
            <person name="Nandkeshwar R."/>
            <person name="Noonan J.P."/>
            <person name="Pitluck S."/>
            <person name="Pollard M."/>
            <person name="Predki P."/>
            <person name="Priest J."/>
            <person name="Ramirez L."/>
            <person name="Retterer J."/>
            <person name="Rodriguez A."/>
            <person name="Rogers S."/>
            <person name="Salamov A."/>
            <person name="Salazar A."/>
            <person name="Thayer N."/>
            <person name="Tice H."/>
            <person name="Tsai M."/>
            <person name="Ustaszewska A."/>
            <person name="Vo N."/>
            <person name="Wheeler J."/>
            <person name="Wu K."/>
            <person name="Yang J."/>
            <person name="Dickson M."/>
            <person name="Cheng J.-F."/>
            <person name="Eichler E.E."/>
            <person name="Olsen A."/>
            <person name="Pennacchio L.A."/>
            <person name="Rokhsar D.S."/>
            <person name="Richardson P."/>
            <person name="Lucas S.M."/>
            <person name="Myers R.M."/>
            <person name="Rubin E.M."/>
        </authorList>
    </citation>
    <scope>NUCLEOTIDE SEQUENCE [LARGE SCALE GENOMIC DNA]</scope>
</reference>
<reference key="2">
    <citation type="journal article" date="2004" name="Genome Res.">
        <title>The status, quality, and expansion of the NIH full-length cDNA project: the Mammalian Gene Collection (MGC).</title>
        <authorList>
            <consortium name="The MGC Project Team"/>
        </authorList>
    </citation>
    <scope>NUCLEOTIDE SEQUENCE [LARGE SCALE MRNA]</scope>
</reference>
<reference key="3">
    <citation type="journal article" date="1999" name="J. Clin. Endocrinol. Metab.">
        <title>Human growth differentiation factor 9 (GDF-9) and its novel homolog GDF-9B are expressed in oocytes during early folliculogenesis.</title>
        <authorList>
            <person name="Aaltonen J."/>
            <person name="Laitinen M.P."/>
            <person name="Vuojolainen K."/>
            <person name="Jaatinen R."/>
            <person name="Horelli-Kuitunen N."/>
            <person name="Seppae L."/>
            <person name="Louhio H."/>
            <person name="Tuuri T."/>
            <person name="Sjoeberg J."/>
            <person name="Buetzow R."/>
            <person name="Hovatta O."/>
            <person name="Dale L."/>
            <person name="Ritvos O."/>
        </authorList>
    </citation>
    <scope>TISSUE SPECIFICITY</scope>
</reference>
<reference key="4">
    <citation type="journal article" date="2002" name="J. Clin. Endocrinol. Metab.">
        <title>Growth differentiation factor-9 inhibits 3'5'-adenosine monophosphate-stimulated steroidogenesis in human granulosa and theca cells.</title>
        <authorList>
            <person name="Yamamoto N."/>
            <person name="Christenson L.K."/>
            <person name="McAllister J.M."/>
            <person name="Strauss J.F. III"/>
        </authorList>
    </citation>
    <scope>FUNCTION AS REGULATOR OF PROGESTERONE RELEASE</scope>
    <scope>TISSUE SPECIFICITY</scope>
</reference>
<reference key="5">
    <citation type="journal article" date="2002" name="J. Clin. Endocrinol. Metab.">
        <authorList>
            <person name="Yamamoto N."/>
            <person name="Christenson L.K."/>
            <person name="McAllister J.M."/>
            <person name="Strauss J.F. III"/>
        </authorList>
    </citation>
    <scope>ERRATUM OF PUBMED:12050262</scope>
</reference>
<reference key="6">
    <citation type="journal article" date="2008" name="Endocrinology">
        <title>Phosphorylation of bone morphogenetic protein-15 and growth and differentiation factor-9 plays a critical role in determining agonistic or antagonistic functions.</title>
        <authorList>
            <person name="McMahon H.E."/>
            <person name="Sharma S."/>
            <person name="Shimasaki S."/>
        </authorList>
    </citation>
    <scope>PHOSPHORYLATION</scope>
</reference>
<reference key="7">
    <citation type="journal article" date="2009" name="Am. J. Physiol.">
        <title>Effects of growth differentiation factor 9 on cell cycle regulators and ERK42/44 in human granulosa cell proliferation.</title>
        <authorList>
            <person name="Huang Q."/>
            <person name="Cheung A.P."/>
            <person name="Zhang Y."/>
            <person name="Huang H.F."/>
            <person name="Auersperg N."/>
            <person name="Leung P.C."/>
        </authorList>
    </citation>
    <scope>FUNCTION IN GRANULOSA CELLS PROLIFERATION</scope>
</reference>
<reference key="8">
    <citation type="journal article" date="2010" name="FEBS Lett.">
        <title>Golgi apparatus casein kinase phosphorylates bioactive Ser-6 of bone morphogenetic protein 15 and growth and differentiation factor 9.</title>
        <authorList>
            <person name="Tibaldi E."/>
            <person name="Arrigoni G."/>
            <person name="Martinez H.M."/>
            <person name="Inagaki K."/>
            <person name="Shimasaki S."/>
            <person name="Pinna L.A."/>
        </authorList>
    </citation>
    <scope>PHOSPHORYLATION AT SER-325 BY CK</scope>
    <scope>IDENTIFICATION BY MASS SPECTROMETRY</scope>
</reference>
<reference key="9">
    <citation type="journal article" date="2010" name="J. Clin. Endocrinol. Metab.">
        <title>Growth differentiation factor 9 reverses activin A suppression of steroidogenic acute regulatory protein expression and progesterone production in human granulosa-lutein cells.</title>
        <authorList>
            <person name="Shi F.T."/>
            <person name="Cheung A.P."/>
            <person name="Klausen C."/>
            <person name="Huang H.F."/>
            <person name="Leung P.C."/>
        </authorList>
    </citation>
    <scope>FUNCTION AS REGULATOR OF STAR EXPRESSION AND PROGESTERONE RELEASE</scope>
</reference>
<reference key="10">
    <citation type="journal article" date="2011" name="J. Clin. Endocrinol. Metab.">
        <title>Growth differentiating factor 9 (GDF9) and bone morphogenetic protein 15 both activate development of human primordial follicles in vitro, with seemingly more beneficial effects of GDF9.</title>
        <authorList>
            <person name="Kedem A."/>
            <person name="Fisch B."/>
            <person name="Garor R."/>
            <person name="Ben-Zaken A."/>
            <person name="Gizunterman T."/>
            <person name="Felz C."/>
            <person name="Ben-Haroush A."/>
            <person name="Kravarusic D."/>
            <person name="Abir R."/>
        </authorList>
    </citation>
    <scope>FUNCTION IN PRIMORDIAL FOLLICLE DEVELOPMENT</scope>
</reference>
<reference key="11">
    <citation type="journal article" date="2011" name="PLoS ONE">
        <title>Growth differentiation factor 9 (GDF9) suppresses follistatin and follistatin-like 3 production in human granulosa-lutein cells.</title>
        <authorList>
            <person name="Shi F.T."/>
            <person name="Cheung A.P."/>
            <person name="Huang H.F."/>
            <person name="Leung P.C."/>
        </authorList>
    </citation>
    <scope>FUNCTION</scope>
</reference>
<reference key="12">
    <citation type="journal article" date="2012" name="Mol. Cell. Endocrinol.">
        <title>The ratio of growth differentiation factor 9: bone morphogenetic protein 15 mRNA expression is tightly co-regulated and differs between species over a wide range of ovulation rates.</title>
        <authorList>
            <person name="Crawford J.L."/>
            <person name="McNatty K.P."/>
        </authorList>
    </citation>
    <scope>SPECIES-SPECIFIC OVULATION RATE DETERMINATION</scope>
</reference>
<reference key="13">
    <citation type="journal article" date="2018" name="Clin. Genet.">
        <title>Identification of the first homozygous 1-bp deletion in GDF9 gene leading to primary ovarian insufficiency by using targeted massively parallel sequencing.</title>
        <authorList>
            <person name="Franca M.M."/>
            <person name="Funari M.F.A."/>
            <person name="Nishi M.Y."/>
            <person name="Narcizo A.M."/>
            <person name="Domenice S."/>
            <person name="Costa E.M.F."/>
            <person name="Lerario A.M."/>
            <person name="Mendonca B.B."/>
        </authorList>
    </citation>
    <scope>INVOLVEMENT IN POF14</scope>
</reference>
<reference key="14">
    <citation type="journal article" date="2005" name="Menopause">
        <title>Mutational screening of the coding region of growth differentiation factor 9 gene in Indian women with ovarian failure.</title>
        <authorList>
            <person name="Dixit H."/>
            <person name="Rao L.K."/>
            <person name="Padmalatha V."/>
            <person name="Kanakavalli M."/>
            <person name="Deenadayal M."/>
            <person name="Gupta N."/>
            <person name="Chakravarty B."/>
            <person name="Singh L."/>
        </authorList>
    </citation>
    <scope>VARIANTS POF14 GLU-67 AND MET-216</scope>
    <scope>INVOLVEMENT IN POF14</scope>
</reference>
<reference key="15">
    <citation type="journal article" date="2006" name="Eur. J. Endocrinol.">
        <title>Mutations and sequence variants in GDF9 and BMP15 in patients with premature ovarian failure.</title>
        <authorList>
            <person name="Laissue P."/>
            <person name="Christin-Maitre S."/>
            <person name="Touraine P."/>
            <person name="Kuttenn F."/>
            <person name="Ritvos O."/>
            <person name="Aittomaki K."/>
            <person name="Bourcigaux N."/>
            <person name="Jacquesson L."/>
            <person name="Bouchard P."/>
            <person name="Frydman R."/>
            <person name="Dewailly D."/>
            <person name="Reyss A.-C."/>
            <person name="Jeffery L."/>
            <person name="Bachelot A."/>
            <person name="Massin N."/>
            <person name="Fellous M."/>
            <person name="Veitia R.A."/>
        </authorList>
    </citation>
    <scope>VARIANT POF14 TYR-186</scope>
    <scope>INVOLVEMENT IN POF14</scope>
</reference>
<reference key="16">
    <citation type="journal article" date="2006" name="J. Clin. Endocrinol. Metab.">
        <title>Novel variants in growth differentiation factor 9 in mothers of dizygotic twins.</title>
        <authorList>
            <person name="Palmer J.S."/>
            <person name="Zhao Z.Z."/>
            <person name="Hoekstra C."/>
            <person name="Hayward N.K."/>
            <person name="Webb P.M."/>
            <person name="Whiteman D.C."/>
            <person name="Martin N.G."/>
            <person name="Boomsma D.I."/>
            <person name="Duffy D.L."/>
            <person name="Montgomery G.W."/>
        </authorList>
    </citation>
    <scope>VARIANT POF14 SER-103</scope>
    <scope>VARIANTS ILE-121; LEU-374 AND CYS-454</scope>
    <scope>POSSIBLE INVOLVEMENT IN DIZYGOTIC TWINNING</scope>
</reference>
<reference key="17">
    <citation type="journal article" date="2007" name="Fertil. Steril.">
        <title>Growth differentiating factor-9 mutations may be associated with premature ovarian failure.</title>
        <authorList>
            <person name="Kovanci E."/>
            <person name="Rohozinski J."/>
            <person name="Simpson J.L."/>
            <person name="Heard M.J."/>
            <person name="Bishop C.E."/>
            <person name="Carson S.A."/>
        </authorList>
    </citation>
    <scope>VARIANT POF14 SER-103</scope>
</reference>
<reference key="18">
    <citation type="journal article" date="2007" name="Fertil. Steril.">
        <title>Analyses of GDF9 mutation in 100 Chinese women with premature ovarian failure.</title>
        <authorList>
            <person name="Zhao H."/>
            <person name="Qin Y."/>
            <person name="Kovanci E."/>
            <person name="Simpson J.L."/>
            <person name="Chen Z.J."/>
            <person name="Rajkovic A."/>
        </authorList>
    </citation>
    <scope>VARIANTS POF14 CYS-146; ALA-238 AND THR-428</scope>
</reference>
<reference key="19">
    <citation type="journal article" date="2010" name="Clin. Endocrinol. (Oxf.)">
        <title>Analyses of growth differentiation factor 9 (GDF9) and bone morphogenetic protein 15 (BMP15) mutation in Chinese women with premature ovarian failure.</title>
        <authorList>
            <person name="Wang B."/>
            <person name="Wen Q."/>
            <person name="Ni F."/>
            <person name="Zhou S."/>
            <person name="Wang J."/>
            <person name="Cao Y."/>
            <person name="Ma X."/>
        </authorList>
    </citation>
    <scope>VARIANT POF14 TYR-57</scope>
</reference>
<accession>O60383</accession>
<accession>Q4VAW5</accession>